<protein>
    <recommendedName>
        <fullName>Adhesin P1</fullName>
    </recommendedName>
    <alternativeName>
        <fullName>Attachment protein</fullName>
    </alternativeName>
    <alternativeName>
        <fullName>Cytadhesin P1</fullName>
    </alternativeName>
</protein>
<accession>P11311</accession>
<organism>
    <name type="scientific">Mycoplasma pneumoniae (strain ATCC 29342 / M129 / Subtype 1)</name>
    <name type="common">Mycoplasmoides pneumoniae</name>
    <dbReference type="NCBI Taxonomy" id="272634"/>
    <lineage>
        <taxon>Bacteria</taxon>
        <taxon>Bacillati</taxon>
        <taxon>Mycoplasmatota</taxon>
        <taxon>Mycoplasmoidales</taxon>
        <taxon>Mycoplasmoidaceae</taxon>
        <taxon>Mycoplasmoides</taxon>
    </lineage>
</organism>
<feature type="signal peptide">
    <location>
        <begin position="1"/>
        <end position="59"/>
    </location>
</feature>
<feature type="chain" id="PRO_0000020629" description="Adhesin P1">
    <location>
        <begin position="60"/>
        <end position="1627"/>
    </location>
</feature>
<feature type="transmembrane region" description="Helical" evidence="1">
    <location>
        <begin position="1527"/>
        <end position="1547"/>
    </location>
</feature>
<feature type="region of interest" description="Disordered" evidence="2">
    <location>
        <begin position="219"/>
        <end position="238"/>
    </location>
</feature>
<feature type="region of interest" description="Disordered" evidence="2">
    <location>
        <begin position="252"/>
        <end position="355"/>
    </location>
</feature>
<feature type="region of interest" description="Disordered" evidence="2">
    <location>
        <begin position="898"/>
        <end position="953"/>
    </location>
</feature>
<feature type="region of interest" description="Disordered" evidence="2">
    <location>
        <begin position="1274"/>
        <end position="1362"/>
    </location>
</feature>
<feature type="region of interest" description="Cytadherence epitope">
    <location>
        <begin position="1403"/>
        <end position="1415"/>
    </location>
</feature>
<feature type="region of interest" description="Disordered" evidence="2">
    <location>
        <begin position="1589"/>
        <end position="1627"/>
    </location>
</feature>
<feature type="compositionally biased region" description="Polar residues" evidence="2">
    <location>
        <begin position="224"/>
        <end position="234"/>
    </location>
</feature>
<feature type="compositionally biased region" description="Low complexity" evidence="2">
    <location>
        <begin position="261"/>
        <end position="276"/>
    </location>
</feature>
<feature type="compositionally biased region" description="Basic and acidic residues" evidence="2">
    <location>
        <begin position="282"/>
        <end position="297"/>
    </location>
</feature>
<feature type="compositionally biased region" description="Polar residues" evidence="2">
    <location>
        <begin position="903"/>
        <end position="933"/>
    </location>
</feature>
<feature type="compositionally biased region" description="Polar residues" evidence="2">
    <location>
        <begin position="939"/>
        <end position="953"/>
    </location>
</feature>
<feature type="compositionally biased region" description="Polar residues" evidence="2">
    <location>
        <begin position="1274"/>
        <end position="1297"/>
    </location>
</feature>
<feature type="compositionally biased region" description="Gly residues" evidence="2">
    <location>
        <begin position="1307"/>
        <end position="1320"/>
    </location>
</feature>
<feature type="compositionally biased region" description="Low complexity" evidence="2">
    <location>
        <begin position="1341"/>
        <end position="1352"/>
    </location>
</feature>
<feature type="compositionally biased region" description="Pro residues" evidence="2">
    <location>
        <begin position="1604"/>
        <end position="1627"/>
    </location>
</feature>
<feature type="turn" evidence="5">
    <location>
        <begin position="72"/>
        <end position="74"/>
    </location>
</feature>
<feature type="strand" evidence="5">
    <location>
        <begin position="78"/>
        <end position="81"/>
    </location>
</feature>
<feature type="strand" evidence="5">
    <location>
        <begin position="87"/>
        <end position="93"/>
    </location>
</feature>
<feature type="helix" evidence="5">
    <location>
        <begin position="113"/>
        <end position="123"/>
    </location>
</feature>
<feature type="strand" evidence="5">
    <location>
        <begin position="126"/>
        <end position="131"/>
    </location>
</feature>
<feature type="strand" evidence="5">
    <location>
        <begin position="137"/>
        <end position="141"/>
    </location>
</feature>
<feature type="turn" evidence="5">
    <location>
        <begin position="143"/>
        <end position="145"/>
    </location>
</feature>
<feature type="turn" evidence="5">
    <location>
        <begin position="163"/>
        <end position="165"/>
    </location>
</feature>
<feature type="turn" evidence="5">
    <location>
        <begin position="178"/>
        <end position="182"/>
    </location>
</feature>
<feature type="strand" evidence="5">
    <location>
        <begin position="183"/>
        <end position="190"/>
    </location>
</feature>
<feature type="strand" evidence="5">
    <location>
        <begin position="197"/>
        <end position="203"/>
    </location>
</feature>
<feature type="helix" evidence="5">
    <location>
        <begin position="205"/>
        <end position="209"/>
    </location>
</feature>
<feature type="helix" evidence="5">
    <location>
        <begin position="210"/>
        <end position="213"/>
    </location>
</feature>
<feature type="helix" evidence="5">
    <location>
        <begin position="248"/>
        <end position="253"/>
    </location>
</feature>
<feature type="strand" evidence="6">
    <location>
        <begin position="257"/>
        <end position="259"/>
    </location>
</feature>
<feature type="strand" evidence="5">
    <location>
        <begin position="287"/>
        <end position="292"/>
    </location>
</feature>
<feature type="strand" evidence="5">
    <location>
        <begin position="306"/>
        <end position="308"/>
    </location>
</feature>
<feature type="helix" evidence="6">
    <location>
        <begin position="309"/>
        <end position="311"/>
    </location>
</feature>
<feature type="strand" evidence="5">
    <location>
        <begin position="314"/>
        <end position="316"/>
    </location>
</feature>
<feature type="helix" evidence="5">
    <location>
        <begin position="329"/>
        <end position="332"/>
    </location>
</feature>
<feature type="helix" evidence="5">
    <location>
        <begin position="359"/>
        <end position="363"/>
    </location>
</feature>
<feature type="helix" evidence="5">
    <location>
        <begin position="366"/>
        <end position="369"/>
    </location>
</feature>
<feature type="strand" evidence="5">
    <location>
        <begin position="372"/>
        <end position="378"/>
    </location>
</feature>
<feature type="strand" evidence="5">
    <location>
        <begin position="382"/>
        <end position="384"/>
    </location>
</feature>
<feature type="strand" evidence="5">
    <location>
        <begin position="386"/>
        <end position="393"/>
    </location>
</feature>
<feature type="helix" evidence="5">
    <location>
        <begin position="396"/>
        <end position="400"/>
    </location>
</feature>
<feature type="helix" evidence="5">
    <location>
        <begin position="405"/>
        <end position="408"/>
    </location>
</feature>
<feature type="turn" evidence="5">
    <location>
        <begin position="414"/>
        <end position="416"/>
    </location>
</feature>
<feature type="helix" evidence="5">
    <location>
        <begin position="417"/>
        <end position="425"/>
    </location>
</feature>
<feature type="strand" evidence="5">
    <location>
        <begin position="431"/>
        <end position="433"/>
    </location>
</feature>
<feature type="turn" evidence="5">
    <location>
        <begin position="435"/>
        <end position="437"/>
    </location>
</feature>
<feature type="helix" evidence="5">
    <location>
        <begin position="439"/>
        <end position="441"/>
    </location>
</feature>
<feature type="helix" evidence="5">
    <location>
        <begin position="445"/>
        <end position="448"/>
    </location>
</feature>
<feature type="helix" evidence="5">
    <location>
        <begin position="463"/>
        <end position="465"/>
    </location>
</feature>
<feature type="strand" evidence="5">
    <location>
        <begin position="472"/>
        <end position="475"/>
    </location>
</feature>
<feature type="helix" evidence="5">
    <location>
        <begin position="484"/>
        <end position="489"/>
    </location>
</feature>
<feature type="strand" evidence="5">
    <location>
        <begin position="494"/>
        <end position="497"/>
    </location>
</feature>
<feature type="strand" evidence="5">
    <location>
        <begin position="500"/>
        <end position="503"/>
    </location>
</feature>
<feature type="turn" evidence="5">
    <location>
        <begin position="509"/>
        <end position="511"/>
    </location>
</feature>
<feature type="strand" evidence="5">
    <location>
        <begin position="522"/>
        <end position="528"/>
    </location>
</feature>
<feature type="strand" evidence="5">
    <location>
        <begin position="530"/>
        <end position="533"/>
    </location>
</feature>
<feature type="strand" evidence="5">
    <location>
        <begin position="535"/>
        <end position="541"/>
    </location>
</feature>
<feature type="helix" evidence="5">
    <location>
        <begin position="542"/>
        <end position="545"/>
    </location>
</feature>
<feature type="turn" evidence="5">
    <location>
        <begin position="546"/>
        <end position="548"/>
    </location>
</feature>
<feature type="helix" evidence="5">
    <location>
        <begin position="551"/>
        <end position="553"/>
    </location>
</feature>
<feature type="strand" evidence="5">
    <location>
        <begin position="574"/>
        <end position="582"/>
    </location>
</feature>
<feature type="strand" evidence="5">
    <location>
        <begin position="585"/>
        <end position="592"/>
    </location>
</feature>
<feature type="helix" evidence="5">
    <location>
        <begin position="608"/>
        <end position="610"/>
    </location>
</feature>
<feature type="helix" evidence="5">
    <location>
        <begin position="612"/>
        <end position="618"/>
    </location>
</feature>
<feature type="helix" evidence="6">
    <location>
        <begin position="631"/>
        <end position="633"/>
    </location>
</feature>
<feature type="strand" evidence="5">
    <location>
        <begin position="634"/>
        <end position="636"/>
    </location>
</feature>
<feature type="helix" evidence="5">
    <location>
        <begin position="642"/>
        <end position="644"/>
    </location>
</feature>
<feature type="strand" evidence="6">
    <location>
        <begin position="648"/>
        <end position="650"/>
    </location>
</feature>
<feature type="turn" evidence="5">
    <location>
        <begin position="655"/>
        <end position="657"/>
    </location>
</feature>
<feature type="helix" evidence="5">
    <location>
        <begin position="663"/>
        <end position="665"/>
    </location>
</feature>
<feature type="helix" evidence="5">
    <location>
        <begin position="671"/>
        <end position="677"/>
    </location>
</feature>
<feature type="helix" evidence="5">
    <location>
        <begin position="679"/>
        <end position="682"/>
    </location>
</feature>
<feature type="turn" evidence="5">
    <location>
        <begin position="683"/>
        <end position="686"/>
    </location>
</feature>
<feature type="strand" evidence="5">
    <location>
        <begin position="690"/>
        <end position="693"/>
    </location>
</feature>
<feature type="helix" evidence="5">
    <location>
        <begin position="702"/>
        <end position="709"/>
    </location>
</feature>
<feature type="strand" evidence="5">
    <location>
        <begin position="732"/>
        <end position="738"/>
    </location>
</feature>
<feature type="helix" evidence="5">
    <location>
        <begin position="740"/>
        <end position="745"/>
    </location>
</feature>
<feature type="helix" evidence="5">
    <location>
        <begin position="754"/>
        <end position="756"/>
    </location>
</feature>
<feature type="helix" evidence="5">
    <location>
        <begin position="762"/>
        <end position="766"/>
    </location>
</feature>
<feature type="helix" evidence="5">
    <location>
        <begin position="780"/>
        <end position="786"/>
    </location>
</feature>
<feature type="strand" evidence="5">
    <location>
        <begin position="787"/>
        <end position="791"/>
    </location>
</feature>
<feature type="helix" evidence="5">
    <location>
        <begin position="798"/>
        <end position="807"/>
    </location>
</feature>
<feature type="turn" evidence="5">
    <location>
        <begin position="811"/>
        <end position="813"/>
    </location>
</feature>
<feature type="turn" evidence="5">
    <location>
        <begin position="817"/>
        <end position="820"/>
    </location>
</feature>
<feature type="helix" evidence="5">
    <location>
        <begin position="823"/>
        <end position="825"/>
    </location>
</feature>
<feature type="strand" evidence="5">
    <location>
        <begin position="826"/>
        <end position="828"/>
    </location>
</feature>
<feature type="strand" evidence="5">
    <location>
        <begin position="862"/>
        <end position="865"/>
    </location>
</feature>
<feature type="strand" evidence="5">
    <location>
        <begin position="890"/>
        <end position="893"/>
    </location>
</feature>
<feature type="strand" evidence="6">
    <location>
        <begin position="896"/>
        <end position="898"/>
    </location>
</feature>
<feature type="strand" evidence="5">
    <location>
        <begin position="906"/>
        <end position="908"/>
    </location>
</feature>
<feature type="strand" evidence="5">
    <location>
        <begin position="911"/>
        <end position="914"/>
    </location>
</feature>
<feature type="helix" evidence="5">
    <location>
        <begin position="915"/>
        <end position="919"/>
    </location>
</feature>
<feature type="turn" evidence="5">
    <location>
        <begin position="955"/>
        <end position="957"/>
    </location>
</feature>
<feature type="strand" evidence="6">
    <location>
        <begin position="962"/>
        <end position="964"/>
    </location>
</feature>
<feature type="strand" evidence="5">
    <location>
        <begin position="966"/>
        <end position="968"/>
    </location>
</feature>
<feature type="helix" evidence="5">
    <location>
        <begin position="982"/>
        <end position="984"/>
    </location>
</feature>
<feature type="helix" evidence="5">
    <location>
        <begin position="989"/>
        <end position="1001"/>
    </location>
</feature>
<feature type="strand" evidence="5">
    <location>
        <begin position="1006"/>
        <end position="1010"/>
    </location>
</feature>
<feature type="helix" evidence="5">
    <location>
        <begin position="1020"/>
        <end position="1022"/>
    </location>
</feature>
<feature type="helix" evidence="5">
    <location>
        <begin position="1027"/>
        <end position="1032"/>
    </location>
</feature>
<feature type="helix" evidence="5">
    <location>
        <begin position="1034"/>
        <end position="1037"/>
    </location>
</feature>
<feature type="strand" evidence="5">
    <location>
        <begin position="1041"/>
        <end position="1045"/>
    </location>
</feature>
<feature type="helix" evidence="5">
    <location>
        <begin position="1050"/>
        <end position="1058"/>
    </location>
</feature>
<feature type="helix" evidence="5">
    <location>
        <begin position="1060"/>
        <end position="1063"/>
    </location>
</feature>
<feature type="strand" evidence="5">
    <location>
        <begin position="1067"/>
        <end position="1071"/>
    </location>
</feature>
<feature type="strand" evidence="5">
    <location>
        <begin position="1086"/>
        <end position="1092"/>
    </location>
</feature>
<feature type="strand" evidence="5">
    <location>
        <begin position="1107"/>
        <end position="1109"/>
    </location>
</feature>
<feature type="strand" evidence="5">
    <location>
        <begin position="1112"/>
        <end position="1117"/>
    </location>
</feature>
<feature type="strand" evidence="5">
    <location>
        <begin position="1120"/>
        <end position="1129"/>
    </location>
</feature>
<feature type="strand" evidence="5">
    <location>
        <begin position="1137"/>
        <end position="1141"/>
    </location>
</feature>
<feature type="helix" evidence="5">
    <location>
        <begin position="1147"/>
        <end position="1153"/>
    </location>
</feature>
<feature type="strand" evidence="5">
    <location>
        <begin position="1156"/>
        <end position="1158"/>
    </location>
</feature>
<feature type="helix" evidence="5">
    <location>
        <begin position="1159"/>
        <end position="1161"/>
    </location>
</feature>
<feature type="strand" evidence="5">
    <location>
        <begin position="1162"/>
        <end position="1167"/>
    </location>
</feature>
<feature type="strand" evidence="6">
    <location>
        <begin position="1169"/>
        <end position="1171"/>
    </location>
</feature>
<feature type="strand" evidence="5">
    <location>
        <begin position="1173"/>
        <end position="1178"/>
    </location>
</feature>
<feature type="helix" evidence="5">
    <location>
        <begin position="1180"/>
        <end position="1186"/>
    </location>
</feature>
<feature type="turn" evidence="5">
    <location>
        <begin position="1190"/>
        <end position="1193"/>
    </location>
</feature>
<feature type="helix" evidence="5">
    <location>
        <begin position="1196"/>
        <end position="1200"/>
    </location>
</feature>
<feature type="strand" evidence="5">
    <location>
        <begin position="1215"/>
        <end position="1218"/>
    </location>
</feature>
<feature type="helix" evidence="5">
    <location>
        <begin position="1219"/>
        <end position="1222"/>
    </location>
</feature>
<feature type="helix" evidence="5">
    <location>
        <begin position="1250"/>
        <end position="1252"/>
    </location>
</feature>
<feature type="helix" evidence="5">
    <location>
        <begin position="1256"/>
        <end position="1259"/>
    </location>
</feature>
<feature type="helix" evidence="5">
    <location>
        <begin position="1260"/>
        <end position="1262"/>
    </location>
</feature>
<feature type="helix" evidence="5">
    <location>
        <begin position="1264"/>
        <end position="1275"/>
    </location>
</feature>
<feature type="strand" evidence="5">
    <location>
        <begin position="1286"/>
        <end position="1291"/>
    </location>
</feature>
<feature type="turn" evidence="6">
    <location>
        <begin position="1297"/>
        <end position="1300"/>
    </location>
</feature>
<feature type="helix" evidence="5">
    <location>
        <begin position="1303"/>
        <end position="1306"/>
    </location>
</feature>
<feature type="helix" evidence="5">
    <location>
        <begin position="1327"/>
        <end position="1336"/>
    </location>
</feature>
<feature type="turn" evidence="5">
    <location>
        <begin position="1362"/>
        <end position="1364"/>
    </location>
</feature>
<feature type="strand" evidence="5">
    <location>
        <begin position="1366"/>
        <end position="1368"/>
    </location>
</feature>
<feature type="helix" evidence="5">
    <location>
        <begin position="1371"/>
        <end position="1373"/>
    </location>
</feature>
<feature type="strand" evidence="5">
    <location>
        <begin position="1374"/>
        <end position="1379"/>
    </location>
</feature>
<feature type="strand" evidence="5">
    <location>
        <begin position="1384"/>
        <end position="1386"/>
    </location>
</feature>
<feature type="strand" evidence="5">
    <location>
        <begin position="1391"/>
        <end position="1393"/>
    </location>
</feature>
<feature type="helix" evidence="5">
    <location>
        <begin position="1412"/>
        <end position="1414"/>
    </location>
</feature>
<feature type="helix" evidence="5">
    <location>
        <begin position="1417"/>
        <end position="1420"/>
    </location>
</feature>
<feature type="helix" evidence="5">
    <location>
        <begin position="1425"/>
        <end position="1427"/>
    </location>
</feature>
<feature type="strand" evidence="5">
    <location>
        <begin position="1428"/>
        <end position="1430"/>
    </location>
</feature>
<feature type="turn" evidence="5">
    <location>
        <begin position="1431"/>
        <end position="1434"/>
    </location>
</feature>
<feature type="helix" evidence="5">
    <location>
        <begin position="1438"/>
        <end position="1440"/>
    </location>
</feature>
<feature type="helix" evidence="5">
    <location>
        <begin position="1441"/>
        <end position="1444"/>
    </location>
</feature>
<feature type="helix" evidence="5">
    <location>
        <begin position="1453"/>
        <end position="1455"/>
    </location>
</feature>
<feature type="strand" evidence="5">
    <location>
        <begin position="1456"/>
        <end position="1464"/>
    </location>
</feature>
<feature type="turn" evidence="5">
    <location>
        <begin position="1465"/>
        <end position="1468"/>
    </location>
</feature>
<feature type="strand" evidence="5">
    <location>
        <begin position="1469"/>
        <end position="1477"/>
    </location>
</feature>
<feature type="strand" evidence="5">
    <location>
        <begin position="1498"/>
        <end position="1500"/>
    </location>
</feature>
<feature type="strand" evidence="5">
    <location>
        <begin position="1508"/>
        <end position="1513"/>
    </location>
</feature>
<comment type="function">
    <text>The protein is the major adhesin mediating the attachment of this mycoplasma to respiratory epithelium.</text>
</comment>
<comment type="subcellular location">
    <subcellularLocation>
        <location evidence="3">Cell membrane</location>
        <topology evidence="4">Single-pass type I membrane protein</topology>
    </subcellularLocation>
    <subcellularLocation>
        <location evidence="3">Cell projection</location>
        <location evidence="3">Attachment organelle</location>
    </subcellularLocation>
    <subcellularLocation>
        <location evidence="3">Cell surface</location>
    </subcellularLocation>
    <text evidence="3">Found on the cell surface, including in the tip (attachment) organelle.</text>
</comment>
<comment type="induction">
    <text evidence="3">Expressed at high levels in all growth phases in vitro (at protein level).</text>
</comment>
<comment type="similarity">
    <text evidence="4">Belongs to the adhesin P1 family.</text>
</comment>
<dbReference type="EMBL" id="M18639">
    <property type="protein sequence ID" value="AAA25424.1"/>
    <property type="molecule type" value="Genomic_DNA"/>
</dbReference>
<dbReference type="EMBL" id="M21519">
    <property type="protein sequence ID" value="AAA88325.1"/>
    <property type="molecule type" value="Genomic_DNA"/>
</dbReference>
<dbReference type="EMBL" id="U00089">
    <property type="protein sequence ID" value="AAB95661.1"/>
    <property type="molecule type" value="Genomic_DNA"/>
</dbReference>
<dbReference type="EMBL" id="X07191">
    <property type="protein sequence ID" value="CAB37298.1"/>
    <property type="molecule type" value="Genomic_DNA"/>
</dbReference>
<dbReference type="PIR" id="A41480">
    <property type="entry name" value="A41480"/>
</dbReference>
<dbReference type="PIR" id="S03725">
    <property type="entry name" value="IJYMAP"/>
</dbReference>
<dbReference type="RefSeq" id="NP_109829.1">
    <property type="nucleotide sequence ID" value="NC_000912.1"/>
</dbReference>
<dbReference type="RefSeq" id="WP_010874498.1">
    <property type="nucleotide sequence ID" value="NZ_OU342337.1"/>
</dbReference>
<dbReference type="PDB" id="6RC9">
    <property type="method" value="X-ray"/>
    <property type="resolution" value="1.94 A"/>
    <property type="chains" value="A=60-1521"/>
</dbReference>
<dbReference type="PDB" id="7BWM">
    <property type="method" value="EM"/>
    <property type="resolution" value="2.90 A"/>
    <property type="chains" value="A=60-1387"/>
</dbReference>
<dbReference type="PDB" id="8ROR">
    <property type="method" value="EM"/>
    <property type="resolution" value="2.39 A"/>
    <property type="chains" value="1=60-1516"/>
</dbReference>
<dbReference type="PDBsum" id="6RC9"/>
<dbReference type="PDBsum" id="7BWM"/>
<dbReference type="PDBsum" id="8ROR"/>
<dbReference type="EMDB" id="EMD-19402"/>
<dbReference type="EMDB" id="EMD-30233"/>
<dbReference type="SMR" id="P11311"/>
<dbReference type="IntAct" id="P11311">
    <property type="interactions" value="8"/>
</dbReference>
<dbReference type="STRING" id="272634.MPN_141"/>
<dbReference type="EnsemblBacteria" id="AAB95661">
    <property type="protein sequence ID" value="AAB95661"/>
    <property type="gene ID" value="MPN_141"/>
</dbReference>
<dbReference type="KEGG" id="mpn:MPN_141"/>
<dbReference type="PATRIC" id="fig|272634.6.peg.155"/>
<dbReference type="HOGENOM" id="CLU_251889_0_0_14"/>
<dbReference type="OrthoDB" id="397662at2"/>
<dbReference type="BioCyc" id="MPNE272634:G1GJ3-237-MONOMER"/>
<dbReference type="Proteomes" id="UP000000808">
    <property type="component" value="Chromosome"/>
</dbReference>
<dbReference type="GO" id="GO:0033099">
    <property type="term" value="C:attachment organelle"/>
    <property type="evidence" value="ECO:0007669"/>
    <property type="project" value="UniProtKB-SubCell"/>
</dbReference>
<dbReference type="GO" id="GO:0042995">
    <property type="term" value="C:cell projection"/>
    <property type="evidence" value="ECO:0007669"/>
    <property type="project" value="UniProtKB-KW"/>
</dbReference>
<dbReference type="GO" id="GO:0009986">
    <property type="term" value="C:cell surface"/>
    <property type="evidence" value="ECO:0007669"/>
    <property type="project" value="UniProtKB-SubCell"/>
</dbReference>
<dbReference type="GO" id="GO:0016020">
    <property type="term" value="C:membrane"/>
    <property type="evidence" value="ECO:0000314"/>
    <property type="project" value="AgBase"/>
</dbReference>
<dbReference type="GO" id="GO:0005886">
    <property type="term" value="C:plasma membrane"/>
    <property type="evidence" value="ECO:0007669"/>
    <property type="project" value="UniProtKB-SubCell"/>
</dbReference>
<dbReference type="GO" id="GO:0020035">
    <property type="term" value="P:adhesion of symbiont to microvasculature"/>
    <property type="evidence" value="ECO:0007669"/>
    <property type="project" value="UniProtKB-KW"/>
</dbReference>
<dbReference type="InterPro" id="IPR022400">
    <property type="entry name" value="Adhesin_P1"/>
</dbReference>
<dbReference type="InterPro" id="IPR004940">
    <property type="entry name" value="Adhesin_P1_C"/>
</dbReference>
<dbReference type="InterPro" id="IPR022116">
    <property type="entry name" value="P1_N"/>
</dbReference>
<dbReference type="NCBIfam" id="TIGR03839">
    <property type="entry name" value="termin_org_P1"/>
    <property type="match status" value="1"/>
</dbReference>
<dbReference type="Pfam" id="PF03257">
    <property type="entry name" value="Adhesin_P1_C"/>
    <property type="match status" value="1"/>
</dbReference>
<dbReference type="Pfam" id="PF12378">
    <property type="entry name" value="P1_N"/>
    <property type="match status" value="1"/>
</dbReference>
<reference key="1">
    <citation type="journal article" date="1987" name="Infect. Immun.">
        <title>Cloning and sequence analysis of cytadhesin P1 gene from Mycoplasma pneumoniae.</title>
        <authorList>
            <person name="Su C.-J."/>
            <person name="Tryon V.V."/>
            <person name="Baseman J.B."/>
        </authorList>
    </citation>
    <scope>NUCLEOTIDE SEQUENCE [GENOMIC DNA]</scope>
    <scope>PARTIAL PROTEIN SEQUENCE</scope>
    <source>
        <strain>ATCC 29342 / M129 / Subtype 1</strain>
    </source>
</reference>
<reference key="2">
    <citation type="journal article" date="1988" name="Gene">
        <title>Nucleotide sequence of the P1 attachment-protein gene of Mycoplasma pneumoniae.</title>
        <authorList>
            <person name="Inamine J.M."/>
            <person name="Denny T.P."/>
            <person name="Loechel S."/>
            <person name="Schaper U."/>
            <person name="Huang C.H."/>
            <person name="Bott K.F."/>
            <person name="Hu P.C."/>
        </authorList>
    </citation>
    <scope>NUCLEOTIDE SEQUENCE [GENOMIC DNA]</scope>
</reference>
<reference key="3">
    <citation type="journal article" date="1996" name="Nucleic Acids Res.">
        <title>Complete sequence analysis of the genome of the bacterium Mycoplasma pneumoniae.</title>
        <authorList>
            <person name="Himmelreich R."/>
            <person name="Hilbert H."/>
            <person name="Plagens H."/>
            <person name="Pirkl E."/>
            <person name="Li B.-C."/>
            <person name="Herrmann R."/>
        </authorList>
    </citation>
    <scope>NUCLEOTIDE SEQUENCE [LARGE SCALE GENOMIC DNA]</scope>
    <source>
        <strain>ATCC 29342 / M129 / Subtype 1</strain>
    </source>
</reference>
<reference key="4">
    <citation type="journal article" date="1988" name="J. Exp. Med.">
        <title>Identification of P1 gene domain containing epitope(s) mediating Mycoplasma pneumoniae cytoadherence.</title>
        <authorList>
            <person name="Dallo S.F."/>
            <person name="Su C.-J."/>
            <person name="Horton J.R."/>
            <person name="Baseman J.B."/>
        </authorList>
    </citation>
    <scope>NUCLEOTIDE SEQUENCE [GENOMIC DNA] OF 1301-1520</scope>
    <source>
        <strain>ATCC 29342 / M129 / Subtype 1</strain>
    </source>
</reference>
<reference key="5">
    <citation type="journal article" date="2000" name="Electrophoresis">
        <title>Towards a two-dimensional proteome map of Mycoplasma pneumoniae.</title>
        <authorList>
            <person name="Regula J.T."/>
            <person name="Ueberle B."/>
            <person name="Boguth G."/>
            <person name="Goerg A."/>
            <person name="Schnoelzer M."/>
            <person name="Herrmann R."/>
            <person name="Frank R."/>
        </authorList>
    </citation>
    <scope>IDENTIFICATION BY MASS SPECTROMETRY</scope>
    <source>
        <strain>ATCC 29342 / M129 / Subtype 1</strain>
    </source>
</reference>
<reference key="6">
    <citation type="journal article" date="2010" name="Mol. Microbiol.">
        <title>Mycoplasma pneumoniae Community Acquired Respiratory Distress Syndrome toxin expression reveals growth phase and infection-dependent regulation.</title>
        <authorList>
            <person name="Kannan T.R."/>
            <person name="Musatovova O."/>
            <person name="Balasubramanian S."/>
            <person name="Cagle M."/>
            <person name="Jordan J.L."/>
            <person name="Krunkosky T.M."/>
            <person name="Davis A."/>
            <person name="Hardy R.D."/>
            <person name="Baseman J.B."/>
        </authorList>
    </citation>
    <scope>SUBCELLULAR LOCATION</scope>
    <scope>INDUCTION</scope>
    <source>
        <strain>S1</strain>
    </source>
</reference>
<sequence>MHQTKKTALSKSTWILILTATASLATGLTVVGHFTSTTTTLKRQQFSYTRPDEVALRHTNAINPRLTPWTYRNTSFSSLPLTGENPGAWALVRDNSAKGITAGSGSQQTTYDPTRTEAALTASTTFALRRYDLAGRALYDLDFSKLNPQTPTRDQTGQITFNPFGGFGLSGAAPQQWNEVKNKVPVEVAQDPSNPYRFAVLLVPRSVVYYEQLQRGLGLPQQRTESGQNTSTTGAMFGLKVKNAEADTAKSNEKLQGAEATGSSTTSGSGQSTQRGGSSGDTKVKALKIEVKKKSDSEDNGQLQLEKNDLANAPIKRSEESGQSVQLKADDFGTALSSSGSGGNSNPGSPTPWRPWLATEQIHKDLPKWSASILILYDAPYARNRTAIDRVDHLDPKAMTANYPPSWRTPKWNHHGLWDWKARDVLLQTTGFFNPRRHPEWFDGGQTVADNEKTGFDVDNSENTKQGFQKEADSDKSAPIALPFEAYFANIGNLTWFGQALLVFGGNGHVTKSAHTAPLSIGVFRVRYNATGTSATVTGWPYALLFSGMVNKQTDGLKDLPFNNNRWFEYVPRMAVAGAKFVGRELVLAGTITMGDTATVPRLLYDELESNLNLVAQGQGLLREDLQLFTPYGWANRPDLPIGAWSSSSSSSHNAPYYFHNNPDWQDRPIQNVVDAFIKPWEDKNGKDDAKYIYPYRYSGMWAWQVYNWSNKLTDQPLSADFVNENAYQPNSLFAAILNPELLAALPDKVKYGKENEFAANEYERFNQKLTVAPTQGTNWSHFSPTLSRFSTGFNLVGSVLDQVLDYVPWIGNGYRYGNNHRGVDDITAPQTSAGSSSGISTNTSGSRSFLPTFSNIGVGLKANVQATLGGSQTMITGGSPRRTLDQANLQLWTGAGWRNDKASSGQSDENHTKFTSATGMDQQGQSGTSAGNPDSLKQDNISKSGDSLTTQDGNAIDQQEATNYTNLPPNLTPTADWPNALSFTNKNNAQRAQLFLRGLLGSIPVLVNRSGSDSNKFQATDQKWSYTDLHSDQTKLNLPAYGEVNGLLNPALVETYFGNTRAGGSGSNTTSSPGIGFKIPEQNNDSKATLITPGLAWTPQDVGNLVVSGTTVSFQLGGWLVTFTDFVKPRAGYLGLQLTGLDASDATQRALIWAPRPWAAFRGSWVNRLGRVESVWDLKGVWADQAQSDSQGSTTTATRNALPEHPNALAFQVSVVEASAYKPNTSSGQTQSTNSSPYLHLVKPKKVTQSDKLDDDLKNLLDPNQVRTKLRQSFGTDHSTQPQPQSLKTTTPVFGTSSGNLSSVLSGGGAGGGSSGSGQSGVDLSPVEKVSGWLVGQLPSTSDGNTSSTNNLAPNTNTGNDVVGVGRLSESNAAKMNDDVDGIVRTPLAELLDGEGQTADTGPQSVKFKSPDQIDFNRLFTHPVTDLFDPVTMLVYDQYIPLFIDIPASVNPKMVRLKVLSFDTNEQSLGLRLEFFKPDQDTQPNNNVQVNPNNGDFLPLLTASSQGPQTLFSPFNQWPDYVLPLAITVPIVVIVLSVTLGLAIGIPMHKNKQALKAGFALSNQKVDVLTKAVGSVFKEIINRTGISQAPKRLKQTSAAKPGAPRPPVPPKPGAPKPPVQPPKKPA</sequence>
<keyword id="KW-0002">3D-structure</keyword>
<keyword id="KW-1003">Cell membrane</keyword>
<keyword id="KW-0966">Cell projection</keyword>
<keyword id="KW-0200">Cytadherence</keyword>
<keyword id="KW-0903">Direct protein sequencing</keyword>
<keyword id="KW-0472">Membrane</keyword>
<keyword id="KW-1185">Reference proteome</keyword>
<keyword id="KW-0732">Signal</keyword>
<keyword id="KW-0812">Transmembrane</keyword>
<keyword id="KW-1133">Transmembrane helix</keyword>
<gene>
    <name type="primary">mgpA</name>
    <name type="ordered locus">MPN_141</name>
    <name type="ORF">MP013</name>
</gene>
<proteinExistence type="evidence at protein level"/>
<evidence type="ECO:0000255" key="1"/>
<evidence type="ECO:0000256" key="2">
    <source>
        <dbReference type="SAM" id="MobiDB-lite"/>
    </source>
</evidence>
<evidence type="ECO:0000269" key="3">
    <source>
    </source>
</evidence>
<evidence type="ECO:0000305" key="4"/>
<evidence type="ECO:0007829" key="5">
    <source>
        <dbReference type="PDB" id="6RC9"/>
    </source>
</evidence>
<evidence type="ECO:0007829" key="6">
    <source>
        <dbReference type="PDB" id="7BWM"/>
    </source>
</evidence>
<name>ADP1_MYCPN</name>